<comment type="function">
    <text evidence="1">Reversibly catalyzes the transfer of the carbamoyl group from carbamoyl phosphate (CP) to the N(epsilon) atom of ornithine (ORN) to produce L-citrulline.</text>
</comment>
<comment type="catalytic activity">
    <reaction evidence="2">
        <text>carbamoyl phosphate + L-ornithine = L-citrulline + phosphate + H(+)</text>
        <dbReference type="Rhea" id="RHEA:19513"/>
        <dbReference type="ChEBI" id="CHEBI:15378"/>
        <dbReference type="ChEBI" id="CHEBI:43474"/>
        <dbReference type="ChEBI" id="CHEBI:46911"/>
        <dbReference type="ChEBI" id="CHEBI:57743"/>
        <dbReference type="ChEBI" id="CHEBI:58228"/>
        <dbReference type="EC" id="2.1.3.3"/>
    </reaction>
</comment>
<comment type="pathway">
    <text evidence="2">Amino-acid biosynthesis; L-arginine biosynthesis; L-arginine from L-ornithine and carbamoyl phosphate: step 1/3.</text>
</comment>
<comment type="subcellular location">
    <subcellularLocation>
        <location evidence="2">Cytoplasm</location>
    </subcellularLocation>
</comment>
<comment type="similarity">
    <text evidence="2">Belongs to the aspartate/ornithine carbamoyltransferase superfamily. OTCase family.</text>
</comment>
<proteinExistence type="inferred from homology"/>
<sequence>MTRHFLRDDDLTPEEQAEVLALAAALKKDPFSRRPLEGPRGVAVIFEKNSTRTRFSFEMGIAQLGGHAVVVDGRSTQLGREETLEDTGAVLSRYVDAIVWRTFAQERLTAMASGASVPIVNALSDEFHPCQVLADLQTLIERKGSLKGLRLAYFGDGANNMAHSLMLGGVTAGVDVTIAAPRGFEPHPMFIAAAETRAHQTGATVAVIDDPLRAADGADVLVTDTWTSMGQENDGLDRVRPFRPFQVNADLLGRADSEAVVLHCLPAHRGHEITDEVIDGPRSAVWDEAENRLHAQKALLVWLLERS</sequence>
<gene>
    <name evidence="2" type="primary">argF</name>
    <name type="ordered locus">Mflv_3526</name>
</gene>
<organism>
    <name type="scientific">Mycolicibacterium gilvum (strain PYR-GCK)</name>
    <name type="common">Mycobacterium gilvum (strain PYR-GCK)</name>
    <dbReference type="NCBI Taxonomy" id="350054"/>
    <lineage>
        <taxon>Bacteria</taxon>
        <taxon>Bacillati</taxon>
        <taxon>Actinomycetota</taxon>
        <taxon>Actinomycetes</taxon>
        <taxon>Mycobacteriales</taxon>
        <taxon>Mycobacteriaceae</taxon>
        <taxon>Mycolicibacterium</taxon>
    </lineage>
</organism>
<feature type="chain" id="PRO_1000084853" description="Ornithine carbamoyltransferase">
    <location>
        <begin position="1"/>
        <end position="307"/>
    </location>
</feature>
<feature type="binding site" evidence="2">
    <location>
        <begin position="50"/>
        <end position="53"/>
    </location>
    <ligand>
        <name>carbamoyl phosphate</name>
        <dbReference type="ChEBI" id="CHEBI:58228"/>
    </ligand>
</feature>
<feature type="binding site" evidence="2">
    <location>
        <position position="77"/>
    </location>
    <ligand>
        <name>carbamoyl phosphate</name>
        <dbReference type="ChEBI" id="CHEBI:58228"/>
    </ligand>
</feature>
<feature type="binding site" evidence="2">
    <location>
        <position position="101"/>
    </location>
    <ligand>
        <name>carbamoyl phosphate</name>
        <dbReference type="ChEBI" id="CHEBI:58228"/>
    </ligand>
</feature>
<feature type="binding site" evidence="2">
    <location>
        <begin position="128"/>
        <end position="131"/>
    </location>
    <ligand>
        <name>carbamoyl phosphate</name>
        <dbReference type="ChEBI" id="CHEBI:58228"/>
    </ligand>
</feature>
<feature type="binding site" evidence="2">
    <location>
        <position position="160"/>
    </location>
    <ligand>
        <name>L-ornithine</name>
        <dbReference type="ChEBI" id="CHEBI:46911"/>
    </ligand>
</feature>
<feature type="binding site" evidence="2">
    <location>
        <position position="224"/>
    </location>
    <ligand>
        <name>L-ornithine</name>
        <dbReference type="ChEBI" id="CHEBI:46911"/>
    </ligand>
</feature>
<feature type="binding site" evidence="2">
    <location>
        <begin position="228"/>
        <end position="229"/>
    </location>
    <ligand>
        <name>L-ornithine</name>
        <dbReference type="ChEBI" id="CHEBI:46911"/>
    </ligand>
</feature>
<feature type="binding site" evidence="2">
    <location>
        <begin position="264"/>
        <end position="265"/>
    </location>
    <ligand>
        <name>carbamoyl phosphate</name>
        <dbReference type="ChEBI" id="CHEBI:58228"/>
    </ligand>
</feature>
<feature type="binding site" evidence="2">
    <location>
        <position position="292"/>
    </location>
    <ligand>
        <name>carbamoyl phosphate</name>
        <dbReference type="ChEBI" id="CHEBI:58228"/>
    </ligand>
</feature>
<dbReference type="EC" id="2.1.3.3" evidence="2"/>
<dbReference type="EMBL" id="CP000656">
    <property type="protein sequence ID" value="ABP46000.1"/>
    <property type="molecule type" value="Genomic_DNA"/>
</dbReference>
<dbReference type="SMR" id="A4T9W6"/>
<dbReference type="STRING" id="350054.Mflv_3526"/>
<dbReference type="KEGG" id="mgi:Mflv_3526"/>
<dbReference type="eggNOG" id="COG0078">
    <property type="taxonomic scope" value="Bacteria"/>
</dbReference>
<dbReference type="HOGENOM" id="CLU_043846_3_2_11"/>
<dbReference type="OrthoDB" id="9802587at2"/>
<dbReference type="UniPathway" id="UPA00068">
    <property type="reaction ID" value="UER00112"/>
</dbReference>
<dbReference type="GO" id="GO:0005737">
    <property type="term" value="C:cytoplasm"/>
    <property type="evidence" value="ECO:0007669"/>
    <property type="project" value="UniProtKB-SubCell"/>
</dbReference>
<dbReference type="GO" id="GO:0016597">
    <property type="term" value="F:amino acid binding"/>
    <property type="evidence" value="ECO:0007669"/>
    <property type="project" value="InterPro"/>
</dbReference>
<dbReference type="GO" id="GO:0004585">
    <property type="term" value="F:ornithine carbamoyltransferase activity"/>
    <property type="evidence" value="ECO:0007669"/>
    <property type="project" value="UniProtKB-UniRule"/>
</dbReference>
<dbReference type="GO" id="GO:0042450">
    <property type="term" value="P:arginine biosynthetic process via ornithine"/>
    <property type="evidence" value="ECO:0007669"/>
    <property type="project" value="TreeGrafter"/>
</dbReference>
<dbReference type="GO" id="GO:0019240">
    <property type="term" value="P:citrulline biosynthetic process"/>
    <property type="evidence" value="ECO:0007669"/>
    <property type="project" value="TreeGrafter"/>
</dbReference>
<dbReference type="GO" id="GO:0006526">
    <property type="term" value="P:L-arginine biosynthetic process"/>
    <property type="evidence" value="ECO:0007669"/>
    <property type="project" value="UniProtKB-UniPathway"/>
</dbReference>
<dbReference type="FunFam" id="3.40.50.1370:FF:000008">
    <property type="entry name" value="Ornithine carbamoyltransferase"/>
    <property type="match status" value="1"/>
</dbReference>
<dbReference type="Gene3D" id="3.40.50.1370">
    <property type="entry name" value="Aspartate/ornithine carbamoyltransferase"/>
    <property type="match status" value="2"/>
</dbReference>
<dbReference type="HAMAP" id="MF_01109">
    <property type="entry name" value="OTCase"/>
    <property type="match status" value="1"/>
</dbReference>
<dbReference type="InterPro" id="IPR006132">
    <property type="entry name" value="Asp/Orn_carbamoyltranf_P-bd"/>
</dbReference>
<dbReference type="InterPro" id="IPR006130">
    <property type="entry name" value="Asp/Orn_carbamoylTrfase"/>
</dbReference>
<dbReference type="InterPro" id="IPR036901">
    <property type="entry name" value="Asp/Orn_carbamoylTrfase_sf"/>
</dbReference>
<dbReference type="InterPro" id="IPR006131">
    <property type="entry name" value="Asp_carbamoyltransf_Asp/Orn-bd"/>
</dbReference>
<dbReference type="InterPro" id="IPR002292">
    <property type="entry name" value="Orn/put_carbamltrans"/>
</dbReference>
<dbReference type="InterPro" id="IPR024904">
    <property type="entry name" value="OTCase_ArgI"/>
</dbReference>
<dbReference type="NCBIfam" id="TIGR00658">
    <property type="entry name" value="orni_carb_tr"/>
    <property type="match status" value="1"/>
</dbReference>
<dbReference type="NCBIfam" id="NF001986">
    <property type="entry name" value="PRK00779.1"/>
    <property type="match status" value="1"/>
</dbReference>
<dbReference type="PANTHER" id="PTHR45753">
    <property type="entry name" value="ORNITHINE CARBAMOYLTRANSFERASE, MITOCHONDRIAL"/>
    <property type="match status" value="1"/>
</dbReference>
<dbReference type="PANTHER" id="PTHR45753:SF3">
    <property type="entry name" value="ORNITHINE TRANSCARBAMYLASE, MITOCHONDRIAL"/>
    <property type="match status" value="1"/>
</dbReference>
<dbReference type="Pfam" id="PF00185">
    <property type="entry name" value="OTCace"/>
    <property type="match status" value="1"/>
</dbReference>
<dbReference type="Pfam" id="PF02729">
    <property type="entry name" value="OTCace_N"/>
    <property type="match status" value="1"/>
</dbReference>
<dbReference type="PRINTS" id="PR00100">
    <property type="entry name" value="AOTCASE"/>
</dbReference>
<dbReference type="PRINTS" id="PR00102">
    <property type="entry name" value="OTCASE"/>
</dbReference>
<dbReference type="SUPFAM" id="SSF53671">
    <property type="entry name" value="Aspartate/ornithine carbamoyltransferase"/>
    <property type="match status" value="1"/>
</dbReference>
<dbReference type="PROSITE" id="PS00097">
    <property type="entry name" value="CARBAMOYLTRANSFERASE"/>
    <property type="match status" value="1"/>
</dbReference>
<accession>A4T9W6</accession>
<protein>
    <recommendedName>
        <fullName evidence="2">Ornithine carbamoyltransferase</fullName>
        <shortName evidence="2">OTCase</shortName>
        <ecNumber evidence="2">2.1.3.3</ecNumber>
    </recommendedName>
</protein>
<keyword id="KW-0028">Amino-acid biosynthesis</keyword>
<keyword id="KW-0055">Arginine biosynthesis</keyword>
<keyword id="KW-0963">Cytoplasm</keyword>
<keyword id="KW-0808">Transferase</keyword>
<evidence type="ECO:0000250" key="1"/>
<evidence type="ECO:0000255" key="2">
    <source>
        <dbReference type="HAMAP-Rule" id="MF_01109"/>
    </source>
</evidence>
<reference key="1">
    <citation type="submission" date="2007-04" db="EMBL/GenBank/DDBJ databases">
        <title>Complete sequence of chromosome of Mycobacterium gilvum PYR-GCK.</title>
        <authorList>
            <consortium name="US DOE Joint Genome Institute"/>
            <person name="Copeland A."/>
            <person name="Lucas S."/>
            <person name="Lapidus A."/>
            <person name="Barry K."/>
            <person name="Detter J.C."/>
            <person name="Glavina del Rio T."/>
            <person name="Hammon N."/>
            <person name="Israni S."/>
            <person name="Dalin E."/>
            <person name="Tice H."/>
            <person name="Pitluck S."/>
            <person name="Chain P."/>
            <person name="Malfatti S."/>
            <person name="Shin M."/>
            <person name="Vergez L."/>
            <person name="Schmutz J."/>
            <person name="Larimer F."/>
            <person name="Land M."/>
            <person name="Hauser L."/>
            <person name="Kyrpides N."/>
            <person name="Mikhailova N."/>
            <person name="Miller C."/>
            <person name="Richardson P."/>
        </authorList>
    </citation>
    <scope>NUCLEOTIDE SEQUENCE [LARGE SCALE GENOMIC DNA]</scope>
    <source>
        <strain>PYR-GCK</strain>
    </source>
</reference>
<name>OTC_MYCGI</name>